<organism>
    <name type="scientific">Rhodospirillum rubrum (strain ATCC 11170 / ATH 1.1.1 / DSM 467 / LMG 4362 / NCIMB 8255 / S1)</name>
    <dbReference type="NCBI Taxonomy" id="269796"/>
    <lineage>
        <taxon>Bacteria</taxon>
        <taxon>Pseudomonadati</taxon>
        <taxon>Pseudomonadota</taxon>
        <taxon>Alphaproteobacteria</taxon>
        <taxon>Rhodospirillales</taxon>
        <taxon>Rhodospirillaceae</taxon>
        <taxon>Rhodospirillum</taxon>
    </lineage>
</organism>
<proteinExistence type="inferred from homology"/>
<sequence length="206" mass="22532">MKCDVKTLDGKDAGSIELSDSVFGLPVRTDLLHRMVRWQLARRQAGTHKTKGISEISGTTAKPFKQKGTGHARQGSKRSPQFRGGATIFGPVVRSHAHDLNKKVRKLGLKTALSAKAQAGQLIVLDQAISESGKTKDLLAQLKVLGLEKVLFIDGPEVNEKFALAARNIIGLDVLPQQGANVYDILRRDTLVLTKEAVKHLEERLQ</sequence>
<feature type="chain" id="PRO_0000242428" description="Large ribosomal subunit protein uL4">
    <location>
        <begin position="1"/>
        <end position="206"/>
    </location>
</feature>
<feature type="region of interest" description="Disordered" evidence="2">
    <location>
        <begin position="60"/>
        <end position="84"/>
    </location>
</feature>
<feature type="compositionally biased region" description="Basic residues" evidence="2">
    <location>
        <begin position="64"/>
        <end position="76"/>
    </location>
</feature>
<keyword id="KW-1185">Reference proteome</keyword>
<keyword id="KW-0687">Ribonucleoprotein</keyword>
<keyword id="KW-0689">Ribosomal protein</keyword>
<keyword id="KW-0694">RNA-binding</keyword>
<keyword id="KW-0699">rRNA-binding</keyword>
<accession>Q2RQW1</accession>
<reference key="1">
    <citation type="journal article" date="2011" name="Stand. Genomic Sci.">
        <title>Complete genome sequence of Rhodospirillum rubrum type strain (S1).</title>
        <authorList>
            <person name="Munk A.C."/>
            <person name="Copeland A."/>
            <person name="Lucas S."/>
            <person name="Lapidus A."/>
            <person name="Del Rio T.G."/>
            <person name="Barry K."/>
            <person name="Detter J.C."/>
            <person name="Hammon N."/>
            <person name="Israni S."/>
            <person name="Pitluck S."/>
            <person name="Brettin T."/>
            <person name="Bruce D."/>
            <person name="Han C."/>
            <person name="Tapia R."/>
            <person name="Gilna P."/>
            <person name="Schmutz J."/>
            <person name="Larimer F."/>
            <person name="Land M."/>
            <person name="Kyrpides N.C."/>
            <person name="Mavromatis K."/>
            <person name="Richardson P."/>
            <person name="Rohde M."/>
            <person name="Goeker M."/>
            <person name="Klenk H.P."/>
            <person name="Zhang Y."/>
            <person name="Roberts G.P."/>
            <person name="Reslewic S."/>
            <person name="Schwartz D.C."/>
        </authorList>
    </citation>
    <scope>NUCLEOTIDE SEQUENCE [LARGE SCALE GENOMIC DNA]</scope>
    <source>
        <strain>ATCC 11170 / ATH 1.1.1 / DSM 467 / LMG 4362 / NCIMB 8255 / S1</strain>
    </source>
</reference>
<name>RL4_RHORT</name>
<comment type="function">
    <text evidence="1">One of the primary rRNA binding proteins, this protein initially binds near the 5'-end of the 23S rRNA. It is important during the early stages of 50S assembly. It makes multiple contacts with different domains of the 23S rRNA in the assembled 50S subunit and ribosome.</text>
</comment>
<comment type="function">
    <text evidence="1">Forms part of the polypeptide exit tunnel.</text>
</comment>
<comment type="subunit">
    <text evidence="1">Part of the 50S ribosomal subunit.</text>
</comment>
<comment type="similarity">
    <text evidence="1">Belongs to the universal ribosomal protein uL4 family.</text>
</comment>
<evidence type="ECO:0000255" key="1">
    <source>
        <dbReference type="HAMAP-Rule" id="MF_01328"/>
    </source>
</evidence>
<evidence type="ECO:0000256" key="2">
    <source>
        <dbReference type="SAM" id="MobiDB-lite"/>
    </source>
</evidence>
<evidence type="ECO:0000305" key="3"/>
<protein>
    <recommendedName>
        <fullName evidence="1">Large ribosomal subunit protein uL4</fullName>
    </recommendedName>
    <alternativeName>
        <fullName evidence="3">50S ribosomal protein L4</fullName>
    </alternativeName>
</protein>
<gene>
    <name evidence="1" type="primary">rplD</name>
    <name type="ordered locus">Rru_A2687</name>
</gene>
<dbReference type="EMBL" id="CP000230">
    <property type="protein sequence ID" value="ABC23484.1"/>
    <property type="molecule type" value="Genomic_DNA"/>
</dbReference>
<dbReference type="RefSeq" id="WP_011390437.1">
    <property type="nucleotide sequence ID" value="NC_007643.1"/>
</dbReference>
<dbReference type="RefSeq" id="YP_427771.1">
    <property type="nucleotide sequence ID" value="NC_007643.1"/>
</dbReference>
<dbReference type="SMR" id="Q2RQW1"/>
<dbReference type="STRING" id="269796.Rru_A2687"/>
<dbReference type="EnsemblBacteria" id="ABC23484">
    <property type="protein sequence ID" value="ABC23484"/>
    <property type="gene ID" value="Rru_A2687"/>
</dbReference>
<dbReference type="KEGG" id="rru:Rru_A2687"/>
<dbReference type="PATRIC" id="fig|269796.9.peg.2794"/>
<dbReference type="eggNOG" id="COG0088">
    <property type="taxonomic scope" value="Bacteria"/>
</dbReference>
<dbReference type="HOGENOM" id="CLU_041575_5_1_5"/>
<dbReference type="PhylomeDB" id="Q2RQW1"/>
<dbReference type="Proteomes" id="UP000001929">
    <property type="component" value="Chromosome"/>
</dbReference>
<dbReference type="GO" id="GO:1990904">
    <property type="term" value="C:ribonucleoprotein complex"/>
    <property type="evidence" value="ECO:0007669"/>
    <property type="project" value="UniProtKB-KW"/>
</dbReference>
<dbReference type="GO" id="GO:0005840">
    <property type="term" value="C:ribosome"/>
    <property type="evidence" value="ECO:0007669"/>
    <property type="project" value="UniProtKB-KW"/>
</dbReference>
<dbReference type="GO" id="GO:0019843">
    <property type="term" value="F:rRNA binding"/>
    <property type="evidence" value="ECO:0007669"/>
    <property type="project" value="UniProtKB-UniRule"/>
</dbReference>
<dbReference type="GO" id="GO:0003735">
    <property type="term" value="F:structural constituent of ribosome"/>
    <property type="evidence" value="ECO:0007669"/>
    <property type="project" value="InterPro"/>
</dbReference>
<dbReference type="GO" id="GO:0006412">
    <property type="term" value="P:translation"/>
    <property type="evidence" value="ECO:0007669"/>
    <property type="project" value="UniProtKB-UniRule"/>
</dbReference>
<dbReference type="Gene3D" id="3.40.1370.10">
    <property type="match status" value="1"/>
</dbReference>
<dbReference type="HAMAP" id="MF_01328_B">
    <property type="entry name" value="Ribosomal_uL4_B"/>
    <property type="match status" value="1"/>
</dbReference>
<dbReference type="InterPro" id="IPR002136">
    <property type="entry name" value="Ribosomal_uL4"/>
</dbReference>
<dbReference type="InterPro" id="IPR013005">
    <property type="entry name" value="Ribosomal_uL4-like"/>
</dbReference>
<dbReference type="InterPro" id="IPR023574">
    <property type="entry name" value="Ribosomal_uL4_dom_sf"/>
</dbReference>
<dbReference type="NCBIfam" id="TIGR03953">
    <property type="entry name" value="rplD_bact"/>
    <property type="match status" value="1"/>
</dbReference>
<dbReference type="PANTHER" id="PTHR10746">
    <property type="entry name" value="50S RIBOSOMAL PROTEIN L4"/>
    <property type="match status" value="1"/>
</dbReference>
<dbReference type="PANTHER" id="PTHR10746:SF6">
    <property type="entry name" value="LARGE RIBOSOMAL SUBUNIT PROTEIN UL4M"/>
    <property type="match status" value="1"/>
</dbReference>
<dbReference type="Pfam" id="PF00573">
    <property type="entry name" value="Ribosomal_L4"/>
    <property type="match status" value="1"/>
</dbReference>
<dbReference type="SUPFAM" id="SSF52166">
    <property type="entry name" value="Ribosomal protein L4"/>
    <property type="match status" value="1"/>
</dbReference>